<feature type="chain" id="PRO_0000201540" description="Heme exporter protein B">
    <location>
        <begin position="1"/>
        <end position="220"/>
    </location>
</feature>
<feature type="topological domain" description="Cytoplasmic" evidence="2">
    <location>
        <begin position="1"/>
        <end position="20"/>
    </location>
</feature>
<feature type="transmembrane region" description="Helical" evidence="2">
    <location>
        <begin position="21"/>
        <end position="41"/>
    </location>
</feature>
<feature type="topological domain" description="Periplasmic" evidence="2">
    <location>
        <begin position="42"/>
        <end position="44"/>
    </location>
</feature>
<feature type="transmembrane region" description="Helical" evidence="2">
    <location>
        <begin position="45"/>
        <end position="65"/>
    </location>
</feature>
<feature type="topological domain" description="Cytoplasmic" evidence="2">
    <location>
        <begin position="66"/>
        <end position="100"/>
    </location>
</feature>
<feature type="transmembrane region" description="Helical" evidence="2">
    <location>
        <begin position="101"/>
        <end position="121"/>
    </location>
</feature>
<feature type="topological domain" description="Periplasmic" evidence="2">
    <location>
        <begin position="122"/>
        <end position="127"/>
    </location>
</feature>
<feature type="transmembrane region" description="Helical" evidence="2">
    <location>
        <begin position="128"/>
        <end position="148"/>
    </location>
</feature>
<feature type="topological domain" description="Cytoplasmic" evidence="2">
    <location>
        <begin position="149"/>
        <end position="158"/>
    </location>
</feature>
<feature type="transmembrane region" description="Helical" evidence="2">
    <location>
        <begin position="159"/>
        <end position="179"/>
    </location>
</feature>
<feature type="topological domain" description="Periplasmic" evidence="2">
    <location>
        <begin position="180"/>
        <end position="192"/>
    </location>
</feature>
<feature type="transmembrane region" description="Helical" evidence="2">
    <location>
        <begin position="193"/>
        <end position="213"/>
    </location>
</feature>
<feature type="topological domain" description="Cytoplasmic" evidence="2">
    <location>
        <begin position="214"/>
        <end position="220"/>
    </location>
</feature>
<reference key="1">
    <citation type="journal article" date="2001" name="Nature">
        <title>Genome sequence of enterohaemorrhagic Escherichia coli O157:H7.</title>
        <authorList>
            <person name="Perna N.T."/>
            <person name="Plunkett G. III"/>
            <person name="Burland V."/>
            <person name="Mau B."/>
            <person name="Glasner J.D."/>
            <person name="Rose D.J."/>
            <person name="Mayhew G.F."/>
            <person name="Evans P.S."/>
            <person name="Gregor J."/>
            <person name="Kirkpatrick H.A."/>
            <person name="Posfai G."/>
            <person name="Hackett J."/>
            <person name="Klink S."/>
            <person name="Boutin A."/>
            <person name="Shao Y."/>
            <person name="Miller L."/>
            <person name="Grotbeck E.J."/>
            <person name="Davis N.W."/>
            <person name="Lim A."/>
            <person name="Dimalanta E.T."/>
            <person name="Potamousis K."/>
            <person name="Apodaca J."/>
            <person name="Anantharaman T.S."/>
            <person name="Lin J."/>
            <person name="Yen G."/>
            <person name="Schwartz D.C."/>
            <person name="Welch R.A."/>
            <person name="Blattner F.R."/>
        </authorList>
    </citation>
    <scope>NUCLEOTIDE SEQUENCE [LARGE SCALE GENOMIC DNA]</scope>
    <source>
        <strain>O157:H7 / EDL933 / ATCC 700927 / EHEC</strain>
    </source>
</reference>
<reference key="2">
    <citation type="journal article" date="2001" name="DNA Res.">
        <title>Complete genome sequence of enterohemorrhagic Escherichia coli O157:H7 and genomic comparison with a laboratory strain K-12.</title>
        <authorList>
            <person name="Hayashi T."/>
            <person name="Makino K."/>
            <person name="Ohnishi M."/>
            <person name="Kurokawa K."/>
            <person name="Ishii K."/>
            <person name="Yokoyama K."/>
            <person name="Han C.-G."/>
            <person name="Ohtsubo E."/>
            <person name="Nakayama K."/>
            <person name="Murata T."/>
            <person name="Tanaka M."/>
            <person name="Tobe T."/>
            <person name="Iida T."/>
            <person name="Takami H."/>
            <person name="Honda T."/>
            <person name="Sasakawa C."/>
            <person name="Ogasawara N."/>
            <person name="Yasunaga T."/>
            <person name="Kuhara S."/>
            <person name="Shiba T."/>
            <person name="Hattori M."/>
            <person name="Shinagawa H."/>
        </authorList>
    </citation>
    <scope>NUCLEOTIDE SEQUENCE [LARGE SCALE GENOMIC DNA]</scope>
    <source>
        <strain>O157:H7 / Sakai / RIMD 0509952 / EHEC</strain>
    </source>
</reference>
<sequence length="220" mass="23619">MMFWRIFRLELRVAFRHSAEIANPLWFFLIVITLFPLSIGPEPQLLARIAPGIIWVAALLSSLLALERLFRDDLQDGSLEQLMLLPLPLPAVVLAKVMAHWMVTGLPLLILSPLVAMLLGMDVYGWQVMALTLLLGTPTLGFLGAPGVALTVGLKRGGVLLSILVLPLTIPLLIFATAAMDAASMHLPVDGYLAILGALLAGTATLSPFATAAALRISIQ</sequence>
<keyword id="KW-0997">Cell inner membrane</keyword>
<keyword id="KW-1003">Cell membrane</keyword>
<keyword id="KW-0201">Cytochrome c-type biogenesis</keyword>
<keyword id="KW-0472">Membrane</keyword>
<keyword id="KW-1185">Reference proteome</keyword>
<keyword id="KW-0812">Transmembrane</keyword>
<keyword id="KW-1133">Transmembrane helix</keyword>
<keyword id="KW-0813">Transport</keyword>
<accession>P0ABM0</accession>
<accession>P33930</accession>
<comment type="function">
    <text evidence="1">Required for the export of heme to the periplasm for the biogenesis of c-type cytochromes.</text>
</comment>
<comment type="subcellular location">
    <subcellularLocation>
        <location evidence="1">Cell inner membrane</location>
        <topology evidence="1">Multi-pass membrane protein</topology>
    </subcellularLocation>
</comment>
<comment type="similarity">
    <text evidence="3">Belongs to the CcmB/CycW/HelB family.</text>
</comment>
<evidence type="ECO:0000250" key="1"/>
<evidence type="ECO:0000255" key="2"/>
<evidence type="ECO:0000305" key="3"/>
<proteinExistence type="inferred from homology"/>
<dbReference type="EMBL" id="AE005174">
    <property type="protein sequence ID" value="AAG57335.1"/>
    <property type="molecule type" value="Genomic_DNA"/>
</dbReference>
<dbReference type="EMBL" id="BA000007">
    <property type="protein sequence ID" value="BAB36512.1"/>
    <property type="molecule type" value="Genomic_DNA"/>
</dbReference>
<dbReference type="PIR" id="A91015">
    <property type="entry name" value="A91015"/>
</dbReference>
<dbReference type="RefSeq" id="NP_311116.1">
    <property type="nucleotide sequence ID" value="NC_002695.1"/>
</dbReference>
<dbReference type="RefSeq" id="WP_000971730.1">
    <property type="nucleotide sequence ID" value="NZ_VOAI01000001.1"/>
</dbReference>
<dbReference type="SMR" id="P0ABM0"/>
<dbReference type="STRING" id="155864.Z3457"/>
<dbReference type="TCDB" id="3.A.1.107.3">
    <property type="family name" value="the atp-binding cassette (abc) superfamily"/>
</dbReference>
<dbReference type="GeneID" id="916795"/>
<dbReference type="GeneID" id="93774978"/>
<dbReference type="KEGG" id="ece:Z3457"/>
<dbReference type="KEGG" id="ecs:ECs_3089"/>
<dbReference type="PATRIC" id="fig|386585.9.peg.3223"/>
<dbReference type="eggNOG" id="COG2386">
    <property type="taxonomic scope" value="Bacteria"/>
</dbReference>
<dbReference type="HOGENOM" id="CLU_079069_1_0_6"/>
<dbReference type="OMA" id="IGPGILW"/>
<dbReference type="Proteomes" id="UP000000558">
    <property type="component" value="Chromosome"/>
</dbReference>
<dbReference type="Proteomes" id="UP000002519">
    <property type="component" value="Chromosome"/>
</dbReference>
<dbReference type="GO" id="GO:0005886">
    <property type="term" value="C:plasma membrane"/>
    <property type="evidence" value="ECO:0007669"/>
    <property type="project" value="UniProtKB-SubCell"/>
</dbReference>
<dbReference type="GO" id="GO:0015232">
    <property type="term" value="F:heme transmembrane transporter activity"/>
    <property type="evidence" value="ECO:0007669"/>
    <property type="project" value="InterPro"/>
</dbReference>
<dbReference type="GO" id="GO:1903607">
    <property type="term" value="P:cytochrome c biosynthetic process"/>
    <property type="evidence" value="ECO:0007669"/>
    <property type="project" value="TreeGrafter"/>
</dbReference>
<dbReference type="GO" id="GO:0017004">
    <property type="term" value="P:cytochrome complex assembly"/>
    <property type="evidence" value="ECO:0007669"/>
    <property type="project" value="UniProtKB-KW"/>
</dbReference>
<dbReference type="InterPro" id="IPR003544">
    <property type="entry name" value="Cyt_c_biogenesis_CcmB"/>
</dbReference>
<dbReference type="InterPro" id="IPR026031">
    <property type="entry name" value="Cyt_c_CcmB_bac"/>
</dbReference>
<dbReference type="NCBIfam" id="TIGR01190">
    <property type="entry name" value="ccmB"/>
    <property type="match status" value="1"/>
</dbReference>
<dbReference type="PANTHER" id="PTHR30070:SF1">
    <property type="entry name" value="CYTOCHROME C BIOGENESIS B-RELATED"/>
    <property type="match status" value="1"/>
</dbReference>
<dbReference type="PANTHER" id="PTHR30070">
    <property type="entry name" value="HEME EXPORTER PROTEIN B"/>
    <property type="match status" value="1"/>
</dbReference>
<dbReference type="Pfam" id="PF03379">
    <property type="entry name" value="CcmB"/>
    <property type="match status" value="1"/>
</dbReference>
<dbReference type="PIRSF" id="PIRSF002764">
    <property type="entry name" value="CcmB"/>
    <property type="match status" value="1"/>
</dbReference>
<dbReference type="PRINTS" id="PR01414">
    <property type="entry name" value="CCMBBIOGNSIS"/>
</dbReference>
<gene>
    <name type="primary">ccmB</name>
    <name type="ordered locus">Z3457</name>
    <name type="ordered locus">ECs3089</name>
</gene>
<protein>
    <recommendedName>
        <fullName>Heme exporter protein B</fullName>
    </recommendedName>
    <alternativeName>
        <fullName>Cytochrome c-type biogenesis protein CcmB</fullName>
    </alternativeName>
</protein>
<name>CCMB_ECO57</name>
<organism>
    <name type="scientific">Escherichia coli O157:H7</name>
    <dbReference type="NCBI Taxonomy" id="83334"/>
    <lineage>
        <taxon>Bacteria</taxon>
        <taxon>Pseudomonadati</taxon>
        <taxon>Pseudomonadota</taxon>
        <taxon>Gammaproteobacteria</taxon>
        <taxon>Enterobacterales</taxon>
        <taxon>Enterobacteriaceae</taxon>
        <taxon>Escherichia</taxon>
    </lineage>
</organism>